<reference key="1">
    <citation type="journal article" date="2000" name="Proc. Natl. Acad. Sci. U.S.A.">
        <title>Genome sequence of Halobacterium species NRC-1.</title>
        <authorList>
            <person name="Ng W.V."/>
            <person name="Kennedy S.P."/>
            <person name="Mahairas G.G."/>
            <person name="Berquist B."/>
            <person name="Pan M."/>
            <person name="Shukla H.D."/>
            <person name="Lasky S.R."/>
            <person name="Baliga N.S."/>
            <person name="Thorsson V."/>
            <person name="Sbrogna J."/>
            <person name="Swartzell S."/>
            <person name="Weir D."/>
            <person name="Hall J."/>
            <person name="Dahl T.A."/>
            <person name="Welti R."/>
            <person name="Goo Y.A."/>
            <person name="Leithauser B."/>
            <person name="Keller K."/>
            <person name="Cruz R."/>
            <person name="Danson M.J."/>
            <person name="Hough D.W."/>
            <person name="Maddocks D.G."/>
            <person name="Jablonski P.E."/>
            <person name="Krebs M.P."/>
            <person name="Angevine C.M."/>
            <person name="Dale H."/>
            <person name="Isenbarger T.A."/>
            <person name="Peck R.F."/>
            <person name="Pohlschroder M."/>
            <person name="Spudich J.L."/>
            <person name="Jung K.-H."/>
            <person name="Alam M."/>
            <person name="Freitas T."/>
            <person name="Hou S."/>
            <person name="Daniels C.J."/>
            <person name="Dennis P.P."/>
            <person name="Omer A.D."/>
            <person name="Ebhardt H."/>
            <person name="Lowe T.M."/>
            <person name="Liang P."/>
            <person name="Riley M."/>
            <person name="Hood L."/>
            <person name="DasSarma S."/>
        </authorList>
    </citation>
    <scope>NUCLEOTIDE SEQUENCE [LARGE SCALE GENOMIC DNA]</scope>
    <source>
        <strain>ATCC 700922 / JCM 11081 / NRC-1</strain>
    </source>
</reference>
<name>PYRG_HALSA</name>
<sequence>MPTETEYDPSLGSKFVFVTGGVMSGLGKGITAASLGRLLSNAGFDVTAVKIDPYLNVDAGTMNPYQHGEVYVLDDGGEVDLDLGNYERFLDEDMTSDHNVTTGKVYQDVIERERSGDYLGKTVQIIPHVTDDIKRRVREAAEGSDVCLVEVGGTVGDIEGMPFLEALRQFSHEQDDEDILFTHVTLVPYSKNGEQKTKPTQHSVKELRSIGLQPDILVGRCEDRLDPDVREKIALFCDVPMDAVFSNPDVEDIYHVPLTVEEEGLDQYVMEQFDMVEDALPAAQRSTEWRDLVTRERTGEVDIALVGKYALEDAYMSIHEALKHASLEAGVEVNVLWVDSEKMHDHHERRIADADGIVVAGGFGSRGTAGKIDAIQHAREHDVPFLGLCLGFQLAVVEYARNVLGMTGAHSAEIDEDTEYPVIDLLPEQYDLEDLGGTMRLGAHETAIEPGTLAHDLYGATSCTERHRHRYEVNPEYIDDLTADGLTFSGEAGNRMEIVEHDDHPFFFGTQFHPEYRSRPTRASPPFVGLLDAVLERADVAPAGSDADVEVTN</sequence>
<evidence type="ECO:0000255" key="1">
    <source>
        <dbReference type="HAMAP-Rule" id="MF_01227"/>
    </source>
</evidence>
<organism>
    <name type="scientific">Halobacterium salinarum (strain ATCC 700922 / JCM 11081 / NRC-1)</name>
    <name type="common">Halobacterium halobium</name>
    <dbReference type="NCBI Taxonomy" id="64091"/>
    <lineage>
        <taxon>Archaea</taxon>
        <taxon>Methanobacteriati</taxon>
        <taxon>Methanobacteriota</taxon>
        <taxon>Stenosarchaea group</taxon>
        <taxon>Halobacteria</taxon>
        <taxon>Halobacteriales</taxon>
        <taxon>Halobacteriaceae</taxon>
        <taxon>Halobacterium</taxon>
        <taxon>Halobacterium salinarum NRC-34001</taxon>
    </lineage>
</organism>
<comment type="function">
    <text evidence="1">Catalyzes the ATP-dependent amination of UTP to CTP with either L-glutamine or ammonia as the source of nitrogen. Regulates intracellular CTP levels through interactions with the four ribonucleotide triphosphates.</text>
</comment>
<comment type="catalytic activity">
    <reaction evidence="1">
        <text>UTP + L-glutamine + ATP + H2O = CTP + L-glutamate + ADP + phosphate + 2 H(+)</text>
        <dbReference type="Rhea" id="RHEA:26426"/>
        <dbReference type="ChEBI" id="CHEBI:15377"/>
        <dbReference type="ChEBI" id="CHEBI:15378"/>
        <dbReference type="ChEBI" id="CHEBI:29985"/>
        <dbReference type="ChEBI" id="CHEBI:30616"/>
        <dbReference type="ChEBI" id="CHEBI:37563"/>
        <dbReference type="ChEBI" id="CHEBI:43474"/>
        <dbReference type="ChEBI" id="CHEBI:46398"/>
        <dbReference type="ChEBI" id="CHEBI:58359"/>
        <dbReference type="ChEBI" id="CHEBI:456216"/>
        <dbReference type="EC" id="6.3.4.2"/>
    </reaction>
</comment>
<comment type="catalytic activity">
    <reaction evidence="1">
        <text>L-glutamine + H2O = L-glutamate + NH4(+)</text>
        <dbReference type="Rhea" id="RHEA:15889"/>
        <dbReference type="ChEBI" id="CHEBI:15377"/>
        <dbReference type="ChEBI" id="CHEBI:28938"/>
        <dbReference type="ChEBI" id="CHEBI:29985"/>
        <dbReference type="ChEBI" id="CHEBI:58359"/>
    </reaction>
</comment>
<comment type="catalytic activity">
    <reaction evidence="1">
        <text>UTP + NH4(+) + ATP = CTP + ADP + phosphate + 2 H(+)</text>
        <dbReference type="Rhea" id="RHEA:16597"/>
        <dbReference type="ChEBI" id="CHEBI:15378"/>
        <dbReference type="ChEBI" id="CHEBI:28938"/>
        <dbReference type="ChEBI" id="CHEBI:30616"/>
        <dbReference type="ChEBI" id="CHEBI:37563"/>
        <dbReference type="ChEBI" id="CHEBI:43474"/>
        <dbReference type="ChEBI" id="CHEBI:46398"/>
        <dbReference type="ChEBI" id="CHEBI:456216"/>
    </reaction>
</comment>
<comment type="activity regulation">
    <text evidence="1">Allosterically activated by GTP, when glutamine is the substrate; GTP has no effect on the reaction when ammonia is the substrate. The allosteric effector GTP functions by stabilizing the protein conformation that binds the tetrahedral intermediate(s) formed during glutamine hydrolysis. Inhibited by the product CTP, via allosteric rather than competitive inhibition.</text>
</comment>
<comment type="pathway">
    <text evidence="1">Pyrimidine metabolism; CTP biosynthesis via de novo pathway; CTP from UDP: step 2/2.</text>
</comment>
<comment type="subunit">
    <text evidence="1">Homotetramer.</text>
</comment>
<comment type="miscellaneous">
    <text evidence="1">CTPSs have evolved a hybrid strategy for distinguishing between UTP and CTP. The overlapping regions of the product feedback inhibitory and substrate sites recognize a common feature in both compounds, the triphosphate moiety. To differentiate isosteric substrate and product pyrimidine rings, an additional pocket far from the expected kinase/ligase catalytic site, specifically recognizes the cytosine and ribose portions of the product inhibitor.</text>
</comment>
<comment type="similarity">
    <text evidence="1">Belongs to the CTP synthase family.</text>
</comment>
<accession>Q9HP32</accession>
<keyword id="KW-0067">ATP-binding</keyword>
<keyword id="KW-0315">Glutamine amidotransferase</keyword>
<keyword id="KW-0436">Ligase</keyword>
<keyword id="KW-0460">Magnesium</keyword>
<keyword id="KW-0479">Metal-binding</keyword>
<keyword id="KW-0547">Nucleotide-binding</keyword>
<keyword id="KW-0665">Pyrimidine biosynthesis</keyword>
<keyword id="KW-1185">Reference proteome</keyword>
<dbReference type="EC" id="6.3.4.2" evidence="1"/>
<dbReference type="EMBL" id="AE004437">
    <property type="protein sequence ID" value="AAG20038.1"/>
    <property type="molecule type" value="Genomic_DNA"/>
</dbReference>
<dbReference type="PIR" id="B84334">
    <property type="entry name" value="B84334"/>
</dbReference>
<dbReference type="RefSeq" id="WP_010903337.1">
    <property type="nucleotide sequence ID" value="NC_002607.1"/>
</dbReference>
<dbReference type="SMR" id="Q9HP32"/>
<dbReference type="FunCoup" id="Q9HP32">
    <property type="interactions" value="170"/>
</dbReference>
<dbReference type="STRING" id="64091.VNG_1830G"/>
<dbReference type="PaxDb" id="64091-VNG_1830G"/>
<dbReference type="KEGG" id="hal:VNG_1830G"/>
<dbReference type="PATRIC" id="fig|64091.14.peg.1395"/>
<dbReference type="HOGENOM" id="CLU_011675_5_0_2"/>
<dbReference type="InParanoid" id="Q9HP32"/>
<dbReference type="OrthoDB" id="52769at2157"/>
<dbReference type="PhylomeDB" id="Q9HP32"/>
<dbReference type="UniPathway" id="UPA00159">
    <property type="reaction ID" value="UER00277"/>
</dbReference>
<dbReference type="Proteomes" id="UP000000554">
    <property type="component" value="Chromosome"/>
</dbReference>
<dbReference type="GO" id="GO:0005524">
    <property type="term" value="F:ATP binding"/>
    <property type="evidence" value="ECO:0007669"/>
    <property type="project" value="UniProtKB-KW"/>
</dbReference>
<dbReference type="GO" id="GO:0003883">
    <property type="term" value="F:CTP synthase activity"/>
    <property type="evidence" value="ECO:0000318"/>
    <property type="project" value="GO_Central"/>
</dbReference>
<dbReference type="GO" id="GO:0004359">
    <property type="term" value="F:glutaminase activity"/>
    <property type="evidence" value="ECO:0007669"/>
    <property type="project" value="RHEA"/>
</dbReference>
<dbReference type="GO" id="GO:0042802">
    <property type="term" value="F:identical protein binding"/>
    <property type="evidence" value="ECO:0000318"/>
    <property type="project" value="GO_Central"/>
</dbReference>
<dbReference type="GO" id="GO:0046872">
    <property type="term" value="F:metal ion binding"/>
    <property type="evidence" value="ECO:0007669"/>
    <property type="project" value="UniProtKB-KW"/>
</dbReference>
<dbReference type="GO" id="GO:0044210">
    <property type="term" value="P:'de novo' CTP biosynthetic process"/>
    <property type="evidence" value="ECO:0007669"/>
    <property type="project" value="UniProtKB-UniRule"/>
</dbReference>
<dbReference type="GO" id="GO:0006241">
    <property type="term" value="P:CTP biosynthetic process"/>
    <property type="evidence" value="ECO:0000318"/>
    <property type="project" value="GO_Central"/>
</dbReference>
<dbReference type="GO" id="GO:0019856">
    <property type="term" value="P:pyrimidine nucleobase biosynthetic process"/>
    <property type="evidence" value="ECO:0000318"/>
    <property type="project" value="GO_Central"/>
</dbReference>
<dbReference type="CDD" id="cd03113">
    <property type="entry name" value="CTPS_N"/>
    <property type="match status" value="1"/>
</dbReference>
<dbReference type="CDD" id="cd01746">
    <property type="entry name" value="GATase1_CTP_Synthase"/>
    <property type="match status" value="1"/>
</dbReference>
<dbReference type="FunFam" id="3.40.50.300:FF:000009">
    <property type="entry name" value="CTP synthase"/>
    <property type="match status" value="1"/>
</dbReference>
<dbReference type="FunFam" id="3.40.50.880:FF:000002">
    <property type="entry name" value="CTP synthase"/>
    <property type="match status" value="1"/>
</dbReference>
<dbReference type="Gene3D" id="3.40.50.880">
    <property type="match status" value="1"/>
</dbReference>
<dbReference type="Gene3D" id="3.40.50.300">
    <property type="entry name" value="P-loop containing nucleotide triphosphate hydrolases"/>
    <property type="match status" value="1"/>
</dbReference>
<dbReference type="HAMAP" id="MF_01227">
    <property type="entry name" value="PyrG"/>
    <property type="match status" value="1"/>
</dbReference>
<dbReference type="InterPro" id="IPR029062">
    <property type="entry name" value="Class_I_gatase-like"/>
</dbReference>
<dbReference type="InterPro" id="IPR004468">
    <property type="entry name" value="CTP_synthase"/>
</dbReference>
<dbReference type="InterPro" id="IPR017456">
    <property type="entry name" value="CTP_synthase_N"/>
</dbReference>
<dbReference type="InterPro" id="IPR017926">
    <property type="entry name" value="GATASE"/>
</dbReference>
<dbReference type="InterPro" id="IPR033828">
    <property type="entry name" value="GATase1_CTP_Synthase"/>
</dbReference>
<dbReference type="InterPro" id="IPR027417">
    <property type="entry name" value="P-loop_NTPase"/>
</dbReference>
<dbReference type="NCBIfam" id="NF003792">
    <property type="entry name" value="PRK05380.1"/>
    <property type="match status" value="1"/>
</dbReference>
<dbReference type="NCBIfam" id="TIGR00337">
    <property type="entry name" value="PyrG"/>
    <property type="match status" value="1"/>
</dbReference>
<dbReference type="PANTHER" id="PTHR11550">
    <property type="entry name" value="CTP SYNTHASE"/>
    <property type="match status" value="1"/>
</dbReference>
<dbReference type="PANTHER" id="PTHR11550:SF0">
    <property type="entry name" value="CTP SYNTHASE-RELATED"/>
    <property type="match status" value="1"/>
</dbReference>
<dbReference type="Pfam" id="PF06418">
    <property type="entry name" value="CTP_synth_N"/>
    <property type="match status" value="1"/>
</dbReference>
<dbReference type="Pfam" id="PF00117">
    <property type="entry name" value="GATase"/>
    <property type="match status" value="1"/>
</dbReference>
<dbReference type="SUPFAM" id="SSF52317">
    <property type="entry name" value="Class I glutamine amidotransferase-like"/>
    <property type="match status" value="1"/>
</dbReference>
<dbReference type="SUPFAM" id="SSF52540">
    <property type="entry name" value="P-loop containing nucleoside triphosphate hydrolases"/>
    <property type="match status" value="1"/>
</dbReference>
<dbReference type="PROSITE" id="PS51273">
    <property type="entry name" value="GATASE_TYPE_1"/>
    <property type="match status" value="1"/>
</dbReference>
<gene>
    <name evidence="1" type="primary">pyrG</name>
    <name type="ordered locus">VNG_1830G</name>
</gene>
<proteinExistence type="inferred from homology"/>
<feature type="chain" id="PRO_0000138258" description="CTP synthase">
    <location>
        <begin position="1"/>
        <end position="553"/>
    </location>
</feature>
<feature type="domain" description="Glutamine amidotransferase type-1" evidence="1">
    <location>
        <begin position="308"/>
        <end position="540"/>
    </location>
</feature>
<feature type="region of interest" description="Amidoligase domain" evidence="1">
    <location>
        <begin position="1"/>
        <end position="275"/>
    </location>
</feature>
<feature type="active site" description="Nucleophile; for glutamine hydrolysis" evidence="1">
    <location>
        <position position="389"/>
    </location>
</feature>
<feature type="active site" evidence="1">
    <location>
        <position position="513"/>
    </location>
</feature>
<feature type="active site" evidence="1">
    <location>
        <position position="515"/>
    </location>
</feature>
<feature type="binding site" evidence="1">
    <location>
        <position position="24"/>
    </location>
    <ligand>
        <name>CTP</name>
        <dbReference type="ChEBI" id="CHEBI:37563"/>
        <note>allosteric inhibitor</note>
    </ligand>
</feature>
<feature type="binding site" evidence="1">
    <location>
        <position position="24"/>
    </location>
    <ligand>
        <name>UTP</name>
        <dbReference type="ChEBI" id="CHEBI:46398"/>
    </ligand>
</feature>
<feature type="binding site" evidence="1">
    <location>
        <begin position="25"/>
        <end position="30"/>
    </location>
    <ligand>
        <name>ATP</name>
        <dbReference type="ChEBI" id="CHEBI:30616"/>
    </ligand>
</feature>
<feature type="binding site" evidence="1">
    <location>
        <position position="65"/>
    </location>
    <ligand>
        <name>L-glutamine</name>
        <dbReference type="ChEBI" id="CHEBI:58359"/>
    </ligand>
</feature>
<feature type="binding site" evidence="1">
    <location>
        <position position="82"/>
    </location>
    <ligand>
        <name>ATP</name>
        <dbReference type="ChEBI" id="CHEBI:30616"/>
    </ligand>
</feature>
<feature type="binding site" evidence="1">
    <location>
        <position position="82"/>
    </location>
    <ligand>
        <name>Mg(2+)</name>
        <dbReference type="ChEBI" id="CHEBI:18420"/>
    </ligand>
</feature>
<feature type="binding site" evidence="1">
    <location>
        <position position="150"/>
    </location>
    <ligand>
        <name>Mg(2+)</name>
        <dbReference type="ChEBI" id="CHEBI:18420"/>
    </ligand>
</feature>
<feature type="binding site" evidence="1">
    <location>
        <begin position="157"/>
        <end position="159"/>
    </location>
    <ligand>
        <name>CTP</name>
        <dbReference type="ChEBI" id="CHEBI:37563"/>
        <note>allosteric inhibitor</note>
    </ligand>
</feature>
<feature type="binding site" evidence="1">
    <location>
        <begin position="196"/>
        <end position="201"/>
    </location>
    <ligand>
        <name>CTP</name>
        <dbReference type="ChEBI" id="CHEBI:37563"/>
        <note>allosteric inhibitor</note>
    </ligand>
</feature>
<feature type="binding site" evidence="1">
    <location>
        <begin position="196"/>
        <end position="201"/>
    </location>
    <ligand>
        <name>UTP</name>
        <dbReference type="ChEBI" id="CHEBI:46398"/>
    </ligand>
</feature>
<feature type="binding site" evidence="1">
    <location>
        <position position="232"/>
    </location>
    <ligand>
        <name>CTP</name>
        <dbReference type="ChEBI" id="CHEBI:37563"/>
        <note>allosteric inhibitor</note>
    </ligand>
</feature>
<feature type="binding site" evidence="1">
    <location>
        <position position="232"/>
    </location>
    <ligand>
        <name>UTP</name>
        <dbReference type="ChEBI" id="CHEBI:46398"/>
    </ligand>
</feature>
<feature type="binding site" evidence="1">
    <location>
        <position position="362"/>
    </location>
    <ligand>
        <name>L-glutamine</name>
        <dbReference type="ChEBI" id="CHEBI:58359"/>
    </ligand>
</feature>
<feature type="binding site" evidence="1">
    <location>
        <begin position="390"/>
        <end position="393"/>
    </location>
    <ligand>
        <name>L-glutamine</name>
        <dbReference type="ChEBI" id="CHEBI:58359"/>
    </ligand>
</feature>
<feature type="binding site" evidence="1">
    <location>
        <position position="413"/>
    </location>
    <ligand>
        <name>L-glutamine</name>
        <dbReference type="ChEBI" id="CHEBI:58359"/>
    </ligand>
</feature>
<feature type="binding site" evidence="1">
    <location>
        <position position="470"/>
    </location>
    <ligand>
        <name>L-glutamine</name>
        <dbReference type="ChEBI" id="CHEBI:58359"/>
    </ligand>
</feature>
<protein>
    <recommendedName>
        <fullName evidence="1">CTP synthase</fullName>
        <ecNumber evidence="1">6.3.4.2</ecNumber>
    </recommendedName>
    <alternativeName>
        <fullName evidence="1">Cytidine 5'-triphosphate synthase</fullName>
    </alternativeName>
    <alternativeName>
        <fullName evidence="1">Cytidine triphosphate synthetase</fullName>
        <shortName evidence="1">CTP synthetase</shortName>
        <shortName evidence="1">CTPS</shortName>
    </alternativeName>
    <alternativeName>
        <fullName evidence="1">UTP--ammonia ligase</fullName>
    </alternativeName>
</protein>